<keyword id="KW-0004">4Fe-4S</keyword>
<keyword id="KW-0963">Cytoplasm</keyword>
<keyword id="KW-0408">Iron</keyword>
<keyword id="KW-0411">Iron-sulfur</keyword>
<keyword id="KW-0479">Metal-binding</keyword>
<keyword id="KW-1185">Reference proteome</keyword>
<keyword id="KW-0949">S-adenosyl-L-methionine</keyword>
<keyword id="KW-0808">Transferase</keyword>
<evidence type="ECO:0000255" key="1">
    <source>
        <dbReference type="HAMAP-Rule" id="MF_01865"/>
    </source>
</evidence>
<evidence type="ECO:0000255" key="2">
    <source>
        <dbReference type="PROSITE-ProRule" id="PRU01266"/>
    </source>
</evidence>
<dbReference type="EC" id="2.8.4.4" evidence="1"/>
<dbReference type="EMBL" id="CP000356">
    <property type="protein sequence ID" value="ABF52439.1"/>
    <property type="molecule type" value="Genomic_DNA"/>
</dbReference>
<dbReference type="RefSeq" id="WP_011541029.1">
    <property type="nucleotide sequence ID" value="NC_008048.1"/>
</dbReference>
<dbReference type="SMR" id="Q1GV83"/>
<dbReference type="STRING" id="317655.Sala_0718"/>
<dbReference type="KEGG" id="sal:Sala_0718"/>
<dbReference type="eggNOG" id="COG0621">
    <property type="taxonomic scope" value="Bacteria"/>
</dbReference>
<dbReference type="HOGENOM" id="CLU_018697_0_0_5"/>
<dbReference type="OrthoDB" id="9805215at2"/>
<dbReference type="Proteomes" id="UP000006578">
    <property type="component" value="Chromosome"/>
</dbReference>
<dbReference type="GO" id="GO:0005829">
    <property type="term" value="C:cytosol"/>
    <property type="evidence" value="ECO:0007669"/>
    <property type="project" value="TreeGrafter"/>
</dbReference>
<dbReference type="GO" id="GO:0051539">
    <property type="term" value="F:4 iron, 4 sulfur cluster binding"/>
    <property type="evidence" value="ECO:0007669"/>
    <property type="project" value="UniProtKB-UniRule"/>
</dbReference>
<dbReference type="GO" id="GO:0035599">
    <property type="term" value="F:aspartic acid methylthiotransferase activity"/>
    <property type="evidence" value="ECO:0007669"/>
    <property type="project" value="TreeGrafter"/>
</dbReference>
<dbReference type="GO" id="GO:0046872">
    <property type="term" value="F:metal ion binding"/>
    <property type="evidence" value="ECO:0007669"/>
    <property type="project" value="UniProtKB-KW"/>
</dbReference>
<dbReference type="GO" id="GO:0103039">
    <property type="term" value="F:protein methylthiotransferase activity"/>
    <property type="evidence" value="ECO:0007669"/>
    <property type="project" value="UniProtKB-EC"/>
</dbReference>
<dbReference type="GO" id="GO:0006400">
    <property type="term" value="P:tRNA modification"/>
    <property type="evidence" value="ECO:0007669"/>
    <property type="project" value="InterPro"/>
</dbReference>
<dbReference type="CDD" id="cd01335">
    <property type="entry name" value="Radical_SAM"/>
    <property type="match status" value="1"/>
</dbReference>
<dbReference type="FunFam" id="3.40.50.12160:FF:000002">
    <property type="entry name" value="Ribosomal protein S12 methylthiotransferase RimO"/>
    <property type="match status" value="1"/>
</dbReference>
<dbReference type="FunFam" id="3.80.30.20:FF:000001">
    <property type="entry name" value="tRNA-2-methylthio-N(6)-dimethylallyladenosine synthase 2"/>
    <property type="match status" value="1"/>
</dbReference>
<dbReference type="Gene3D" id="3.40.50.12160">
    <property type="entry name" value="Methylthiotransferase, N-terminal domain"/>
    <property type="match status" value="1"/>
</dbReference>
<dbReference type="Gene3D" id="2.40.50.140">
    <property type="entry name" value="Nucleic acid-binding proteins"/>
    <property type="match status" value="1"/>
</dbReference>
<dbReference type="Gene3D" id="3.80.30.20">
    <property type="entry name" value="tm_1862 like domain"/>
    <property type="match status" value="1"/>
</dbReference>
<dbReference type="HAMAP" id="MF_01865">
    <property type="entry name" value="MTTase_RimO"/>
    <property type="match status" value="1"/>
</dbReference>
<dbReference type="InterPro" id="IPR006638">
    <property type="entry name" value="Elp3/MiaA/NifB-like_rSAM"/>
</dbReference>
<dbReference type="InterPro" id="IPR005839">
    <property type="entry name" value="Methylthiotransferase"/>
</dbReference>
<dbReference type="InterPro" id="IPR020612">
    <property type="entry name" value="Methylthiotransferase_CS"/>
</dbReference>
<dbReference type="InterPro" id="IPR013848">
    <property type="entry name" value="Methylthiotransferase_N"/>
</dbReference>
<dbReference type="InterPro" id="IPR038135">
    <property type="entry name" value="Methylthiotransferase_N_sf"/>
</dbReference>
<dbReference type="InterPro" id="IPR012340">
    <property type="entry name" value="NA-bd_OB-fold"/>
</dbReference>
<dbReference type="InterPro" id="IPR005840">
    <property type="entry name" value="Ribosomal_uS12_MeSTrfase_RimO"/>
</dbReference>
<dbReference type="InterPro" id="IPR007197">
    <property type="entry name" value="rSAM"/>
</dbReference>
<dbReference type="InterPro" id="IPR023404">
    <property type="entry name" value="rSAM_horseshoe"/>
</dbReference>
<dbReference type="InterPro" id="IPR002792">
    <property type="entry name" value="TRAM_dom"/>
</dbReference>
<dbReference type="NCBIfam" id="TIGR01125">
    <property type="entry name" value="30S ribosomal protein S12 methylthiotransferase RimO"/>
    <property type="match status" value="1"/>
</dbReference>
<dbReference type="NCBIfam" id="TIGR00089">
    <property type="entry name" value="MiaB/RimO family radical SAM methylthiotransferase"/>
    <property type="match status" value="1"/>
</dbReference>
<dbReference type="PANTHER" id="PTHR43837">
    <property type="entry name" value="RIBOSOMAL PROTEIN S12 METHYLTHIOTRANSFERASE RIMO"/>
    <property type="match status" value="1"/>
</dbReference>
<dbReference type="PANTHER" id="PTHR43837:SF1">
    <property type="entry name" value="RIBOSOMAL PROTEIN US12 METHYLTHIOTRANSFERASE RIMO"/>
    <property type="match status" value="1"/>
</dbReference>
<dbReference type="Pfam" id="PF04055">
    <property type="entry name" value="Radical_SAM"/>
    <property type="match status" value="1"/>
</dbReference>
<dbReference type="Pfam" id="PF18693">
    <property type="entry name" value="TRAM_2"/>
    <property type="match status" value="1"/>
</dbReference>
<dbReference type="Pfam" id="PF00919">
    <property type="entry name" value="UPF0004"/>
    <property type="match status" value="1"/>
</dbReference>
<dbReference type="SFLD" id="SFLDG01082">
    <property type="entry name" value="B12-binding_domain_containing"/>
    <property type="match status" value="1"/>
</dbReference>
<dbReference type="SFLD" id="SFLDS00029">
    <property type="entry name" value="Radical_SAM"/>
    <property type="match status" value="1"/>
</dbReference>
<dbReference type="SFLD" id="SFLDF00274">
    <property type="entry name" value="ribosomal_protein_S12_methylth"/>
    <property type="match status" value="1"/>
</dbReference>
<dbReference type="SMART" id="SM00729">
    <property type="entry name" value="Elp3"/>
    <property type="match status" value="1"/>
</dbReference>
<dbReference type="SUPFAM" id="SSF102114">
    <property type="entry name" value="Radical SAM enzymes"/>
    <property type="match status" value="1"/>
</dbReference>
<dbReference type="PROSITE" id="PS51449">
    <property type="entry name" value="MTTASE_N"/>
    <property type="match status" value="1"/>
</dbReference>
<dbReference type="PROSITE" id="PS01278">
    <property type="entry name" value="MTTASE_RADICAL"/>
    <property type="match status" value="1"/>
</dbReference>
<dbReference type="PROSITE" id="PS51918">
    <property type="entry name" value="RADICAL_SAM"/>
    <property type="match status" value="1"/>
</dbReference>
<dbReference type="PROSITE" id="PS50926">
    <property type="entry name" value="TRAM"/>
    <property type="match status" value="1"/>
</dbReference>
<feature type="chain" id="PRO_0000375019" description="Ribosomal protein uS12 methylthiotransferase RimO">
    <location>
        <begin position="1"/>
        <end position="455"/>
    </location>
</feature>
<feature type="domain" description="MTTase N-terminal" evidence="1">
    <location>
        <begin position="10"/>
        <end position="120"/>
    </location>
</feature>
<feature type="domain" description="Radical SAM core" evidence="2">
    <location>
        <begin position="137"/>
        <end position="380"/>
    </location>
</feature>
<feature type="domain" description="TRAM" evidence="1">
    <location>
        <begin position="383"/>
        <end position="455"/>
    </location>
</feature>
<feature type="binding site" evidence="1">
    <location>
        <position position="19"/>
    </location>
    <ligand>
        <name>[4Fe-4S] cluster</name>
        <dbReference type="ChEBI" id="CHEBI:49883"/>
        <label>1</label>
    </ligand>
</feature>
<feature type="binding site" evidence="1">
    <location>
        <position position="55"/>
    </location>
    <ligand>
        <name>[4Fe-4S] cluster</name>
        <dbReference type="ChEBI" id="CHEBI:49883"/>
        <label>1</label>
    </ligand>
</feature>
<feature type="binding site" evidence="1">
    <location>
        <position position="84"/>
    </location>
    <ligand>
        <name>[4Fe-4S] cluster</name>
        <dbReference type="ChEBI" id="CHEBI:49883"/>
        <label>1</label>
    </ligand>
</feature>
<feature type="binding site" evidence="1">
    <location>
        <position position="151"/>
    </location>
    <ligand>
        <name>[4Fe-4S] cluster</name>
        <dbReference type="ChEBI" id="CHEBI:49883"/>
        <label>2</label>
        <note>4Fe-4S-S-AdoMet</note>
    </ligand>
</feature>
<feature type="binding site" evidence="1">
    <location>
        <position position="155"/>
    </location>
    <ligand>
        <name>[4Fe-4S] cluster</name>
        <dbReference type="ChEBI" id="CHEBI:49883"/>
        <label>2</label>
        <note>4Fe-4S-S-AdoMet</note>
    </ligand>
</feature>
<feature type="binding site" evidence="1">
    <location>
        <position position="158"/>
    </location>
    <ligand>
        <name>[4Fe-4S] cluster</name>
        <dbReference type="ChEBI" id="CHEBI:49883"/>
        <label>2</label>
        <note>4Fe-4S-S-AdoMet</note>
    </ligand>
</feature>
<proteinExistence type="inferred from homology"/>
<comment type="function">
    <text evidence="1">Catalyzes the methylthiolation of an aspartic acid residue of ribosomal protein uS12.</text>
</comment>
<comment type="catalytic activity">
    <reaction evidence="1">
        <text>L-aspartate(89)-[ribosomal protein uS12]-hydrogen + (sulfur carrier)-SH + AH2 + 2 S-adenosyl-L-methionine = 3-methylsulfanyl-L-aspartate(89)-[ribosomal protein uS12]-hydrogen + (sulfur carrier)-H + 5'-deoxyadenosine + L-methionine + A + S-adenosyl-L-homocysteine + 2 H(+)</text>
        <dbReference type="Rhea" id="RHEA:37087"/>
        <dbReference type="Rhea" id="RHEA-COMP:10460"/>
        <dbReference type="Rhea" id="RHEA-COMP:10461"/>
        <dbReference type="Rhea" id="RHEA-COMP:14737"/>
        <dbReference type="Rhea" id="RHEA-COMP:14739"/>
        <dbReference type="ChEBI" id="CHEBI:13193"/>
        <dbReference type="ChEBI" id="CHEBI:15378"/>
        <dbReference type="ChEBI" id="CHEBI:17319"/>
        <dbReference type="ChEBI" id="CHEBI:17499"/>
        <dbReference type="ChEBI" id="CHEBI:29917"/>
        <dbReference type="ChEBI" id="CHEBI:29961"/>
        <dbReference type="ChEBI" id="CHEBI:57844"/>
        <dbReference type="ChEBI" id="CHEBI:57856"/>
        <dbReference type="ChEBI" id="CHEBI:59789"/>
        <dbReference type="ChEBI" id="CHEBI:64428"/>
        <dbReference type="ChEBI" id="CHEBI:73599"/>
        <dbReference type="EC" id="2.8.4.4"/>
    </reaction>
</comment>
<comment type="cofactor">
    <cofactor evidence="1">
        <name>[4Fe-4S] cluster</name>
        <dbReference type="ChEBI" id="CHEBI:49883"/>
    </cofactor>
    <text evidence="1">Binds 2 [4Fe-4S] clusters. One cluster is coordinated with 3 cysteines and an exchangeable S-adenosyl-L-methionine.</text>
</comment>
<comment type="subcellular location">
    <subcellularLocation>
        <location evidence="1">Cytoplasm</location>
    </subcellularLocation>
</comment>
<comment type="similarity">
    <text evidence="1">Belongs to the methylthiotransferase family. RimO subfamily.</text>
</comment>
<reference key="1">
    <citation type="journal article" date="2009" name="Proc. Natl. Acad. Sci. U.S.A.">
        <title>The genomic basis of trophic strategy in marine bacteria.</title>
        <authorList>
            <person name="Lauro F.M."/>
            <person name="McDougald D."/>
            <person name="Thomas T."/>
            <person name="Williams T.J."/>
            <person name="Egan S."/>
            <person name="Rice S."/>
            <person name="DeMaere M.Z."/>
            <person name="Ting L."/>
            <person name="Ertan H."/>
            <person name="Johnson J."/>
            <person name="Ferriera S."/>
            <person name="Lapidus A."/>
            <person name="Anderson I."/>
            <person name="Kyrpides N."/>
            <person name="Munk A.C."/>
            <person name="Detter C."/>
            <person name="Han C.S."/>
            <person name="Brown M.V."/>
            <person name="Robb F.T."/>
            <person name="Kjelleberg S."/>
            <person name="Cavicchioli R."/>
        </authorList>
    </citation>
    <scope>NUCLEOTIDE SEQUENCE [LARGE SCALE GENOMIC DNA]</scope>
    <source>
        <strain>DSM 13593 / LMG 18877 / RB2256</strain>
    </source>
</reference>
<organism>
    <name type="scientific">Sphingopyxis alaskensis (strain DSM 13593 / LMG 18877 / RB2256)</name>
    <name type="common">Sphingomonas alaskensis</name>
    <dbReference type="NCBI Taxonomy" id="317655"/>
    <lineage>
        <taxon>Bacteria</taxon>
        <taxon>Pseudomonadati</taxon>
        <taxon>Pseudomonadota</taxon>
        <taxon>Alphaproteobacteria</taxon>
        <taxon>Sphingomonadales</taxon>
        <taxon>Sphingomonadaceae</taxon>
        <taxon>Sphingopyxis</taxon>
    </lineage>
</organism>
<accession>Q1GV83</accession>
<sequence>MTTKILPSQPKVGMVSLGCPKALVDSERILTKLRADGYGLSPDYAGADVVLVNTCGFLDSAKEESLEAIGEAMAENGRVIVTGCMGKEADVIRARFPNVLAVTGAHQYEQVVEAVHDAAPPTQGPFVDLVPEGGLKLTPRHYSYLKISEGCNHSCAFCIIPDLRGKLVSRRIDAVLREAEKLVAAGTKELLVISQDTSAYGVDIRHDPRQWHGREIRAHMTDLARELGQLRTSEGRAPWVRLHYVYPYPHVDAVIPLMAEGLLTPYLDIPFQHASPSVLKRMKRPANEAKVLERLKSWRAIAPDIAIRSSFVVGFPGETEADFQYLLDWLEEAQLDRVGAFRFEPVAGAQANALPEPVPDEVKEERYQRIMAKTAAISAAKLEAKIGRTLPVIIDEVGEADEDGSIGATGRSQADAPEIDGHVYLRDVAATLKAGDIVDVEIEDADEHDLFGVVT</sequence>
<name>RIMO_SPHAL</name>
<gene>
    <name evidence="1" type="primary">rimO</name>
    <name type="ordered locus">Sala_0718</name>
</gene>
<protein>
    <recommendedName>
        <fullName evidence="1">Ribosomal protein uS12 methylthiotransferase RimO</fullName>
        <shortName evidence="1">uS12 MTTase</shortName>
        <shortName evidence="1">uS12 methylthiotransferase</shortName>
        <ecNumber evidence="1">2.8.4.4</ecNumber>
    </recommendedName>
    <alternativeName>
        <fullName evidence="1">Ribosomal protein uS12 (aspartate-C(3))-methylthiotransferase</fullName>
    </alternativeName>
    <alternativeName>
        <fullName evidence="1">Ribosome maturation factor RimO</fullName>
    </alternativeName>
</protein>